<protein>
    <recommendedName>
        <fullName evidence="1 3">Epoxyqueuosine reductase QueH</fullName>
        <ecNumber evidence="1 5">1.17.99.6</ecNumber>
    </recommendedName>
    <alternativeName>
        <fullName evidence="1 4">Queuosine biosynthesis protein QueH</fullName>
    </alternativeName>
</protein>
<evidence type="ECO:0000255" key="1">
    <source>
        <dbReference type="HAMAP-Rule" id="MF_02089"/>
    </source>
</evidence>
<evidence type="ECO:0000269" key="2">
    <source>
    </source>
</evidence>
<evidence type="ECO:0000303" key="3">
    <source>
    </source>
</evidence>
<evidence type="ECO:0000305" key="4"/>
<evidence type="ECO:0000305" key="5">
    <source>
    </source>
</evidence>
<evidence type="ECO:0000312" key="6">
    <source>
        <dbReference type="EMBL" id="AAD07168.1"/>
    </source>
</evidence>
<proteinExistence type="evidence at protein level"/>
<organism>
    <name type="scientific">Helicobacter pylori (strain ATCC 700392 / 26695)</name>
    <name type="common">Campylobacter pylori</name>
    <dbReference type="NCBI Taxonomy" id="85962"/>
    <lineage>
        <taxon>Bacteria</taxon>
        <taxon>Pseudomonadati</taxon>
        <taxon>Campylobacterota</taxon>
        <taxon>Epsilonproteobacteria</taxon>
        <taxon>Campylobacterales</taxon>
        <taxon>Helicobacteraceae</taxon>
        <taxon>Helicobacter</taxon>
    </lineage>
</organism>
<feature type="chain" id="PRO_0000439902" description="Epoxyqueuosine reductase QueH">
    <location>
        <begin position="1"/>
        <end position="368"/>
    </location>
</feature>
<feature type="binding site" evidence="1">
    <location>
        <position position="6"/>
    </location>
    <ligand>
        <name>[4Fe-4S] cluster</name>
        <dbReference type="ChEBI" id="CHEBI:49883"/>
    </ligand>
</feature>
<feature type="binding site" evidence="1">
    <location>
        <position position="7"/>
    </location>
    <ligand>
        <name>[4Fe-4S] cluster</name>
        <dbReference type="ChEBI" id="CHEBI:49883"/>
    </ligand>
</feature>
<feature type="binding site" evidence="1">
    <location>
        <position position="87"/>
    </location>
    <ligand>
        <name>[4Fe-4S] cluster</name>
        <dbReference type="ChEBI" id="CHEBI:49883"/>
    </ligand>
</feature>
<feature type="binding site" evidence="1">
    <location>
        <position position="90"/>
    </location>
    <ligand>
        <name>[4Fe-4S] cluster</name>
        <dbReference type="ChEBI" id="CHEBI:49883"/>
    </ligand>
</feature>
<feature type="disulfide bond" description="Redox-active" evidence="1">
    <location>
        <begin position="174"/>
        <end position="176"/>
    </location>
</feature>
<comment type="function">
    <text evidence="1 2">Catalyzes the conversion of epoxyqueuosine (oQ) to queuosine (Q), which is a hypermodified base found in the wobble positions of tRNA(Asp), tRNA(Asn), tRNA(His) and tRNA(Tyr).</text>
</comment>
<comment type="catalytic activity">
    <reaction evidence="1 5">
        <text>epoxyqueuosine(34) in tRNA + AH2 = queuosine(34) in tRNA + A + H2O</text>
        <dbReference type="Rhea" id="RHEA:32159"/>
        <dbReference type="Rhea" id="RHEA-COMP:18571"/>
        <dbReference type="Rhea" id="RHEA-COMP:18582"/>
        <dbReference type="ChEBI" id="CHEBI:13193"/>
        <dbReference type="ChEBI" id="CHEBI:15377"/>
        <dbReference type="ChEBI" id="CHEBI:17499"/>
        <dbReference type="ChEBI" id="CHEBI:194431"/>
        <dbReference type="ChEBI" id="CHEBI:194443"/>
        <dbReference type="EC" id="1.17.99.6"/>
    </reaction>
</comment>
<comment type="pathway">
    <text evidence="1 5">tRNA modification; tRNA-queuosine biosynthesis.</text>
</comment>
<comment type="interaction">
    <interactant intactId="EBI-7494854">
        <id>O24926</id>
    </interactant>
    <interactant intactId="EBI-7506839">
        <id>O34461</id>
        <label>HP_1411</label>
    </interactant>
    <organismsDiffer>false</organismsDiffer>
    <experiments>3</experiments>
</comment>
<comment type="similarity">
    <text evidence="1 4">Belongs to the QueH family.</text>
</comment>
<sequence length="368" mass="42665">MLIHICCSVDNLYFLKKAKEAFAGEKIVGFFYNPNIHPYSEYLLRLEDVKRTCEMLGIELLEGDYELEKFLDKAKGKELLGEKSERCFECFDLRLEASALKAFELGEEKFTTTLLTSPKKDPNQLIAKGQSIAQRHNLEFVVFRNDNFEHFKSELDLNLQALARENELYRQNYCGCQFALKIQKESQNRSPFELYSPLKRQILPASIEERTQVFRTLDMAKKDANKPFLAQKTIATYRLLNGGVWLSKNSNPLNCCILARSKSKAKVRINDLRWVFSQRLSVLVGYSQRDETLFLTLEGLNTLMAKNYDNLKELNLNPLNYEEELSLRALVSGSESINPIIVLEERTEKTLFVEIKSVFQEEKVFYLL</sequence>
<name>QUEH_HELPY</name>
<accession>O24926</accession>
<gene>
    <name evidence="1 3" type="primary">queH</name>
    <name evidence="6" type="ordered locus">HP_0100</name>
</gene>
<reference key="1">
    <citation type="journal article" date="1997" name="Nature">
        <title>The complete genome sequence of the gastric pathogen Helicobacter pylori.</title>
        <authorList>
            <person name="Tomb J.-F."/>
            <person name="White O."/>
            <person name="Kerlavage A.R."/>
            <person name="Clayton R.A."/>
            <person name="Sutton G.G."/>
            <person name="Fleischmann R.D."/>
            <person name="Ketchum K.A."/>
            <person name="Klenk H.-P."/>
            <person name="Gill S.R."/>
            <person name="Dougherty B.A."/>
            <person name="Nelson K.E."/>
            <person name="Quackenbush J."/>
            <person name="Zhou L."/>
            <person name="Kirkness E.F."/>
            <person name="Peterson S.N."/>
            <person name="Loftus B.J."/>
            <person name="Richardson D.L."/>
            <person name="Dodson R.J."/>
            <person name="Khalak H.G."/>
            <person name="Glodek A."/>
            <person name="McKenney K."/>
            <person name="FitzGerald L.M."/>
            <person name="Lee N."/>
            <person name="Adams M.D."/>
            <person name="Hickey E.K."/>
            <person name="Berg D.E."/>
            <person name="Gocayne J.D."/>
            <person name="Utterback T.R."/>
            <person name="Peterson J.D."/>
            <person name="Kelley J.M."/>
            <person name="Cotton M.D."/>
            <person name="Weidman J.F."/>
            <person name="Fujii C."/>
            <person name="Bowman C."/>
            <person name="Watthey L."/>
            <person name="Wallin E."/>
            <person name="Hayes W.S."/>
            <person name="Borodovsky M."/>
            <person name="Karp P.D."/>
            <person name="Smith H.O."/>
            <person name="Fraser C.M."/>
            <person name="Venter J.C."/>
        </authorList>
    </citation>
    <scope>NUCLEOTIDE SEQUENCE [LARGE SCALE GENOMIC DNA]</scope>
    <source>
        <strain>ATCC 700392 / 26695</strain>
    </source>
</reference>
<reference key="2">
    <citation type="journal article" date="2017" name="ACS Chem. Biol.">
        <title>Identification of a novel epoxyqueuosine reductase family by comparative genomics.</title>
        <authorList>
            <person name="Zallot R."/>
            <person name="Ross R."/>
            <person name="Chen W.H."/>
            <person name="Bruner S.D."/>
            <person name="Limbach P.A."/>
            <person name="de Crecy-Lagard V."/>
        </authorList>
    </citation>
    <scope>FUNCTION</scope>
    <scope>CATALYTIC ACTIVITY</scope>
    <scope>PATHWAY</scope>
    <source>
        <strain>ATCC 700392 / 26695</strain>
    </source>
</reference>
<keyword id="KW-0004">4Fe-4S</keyword>
<keyword id="KW-1015">Disulfide bond</keyword>
<keyword id="KW-0408">Iron</keyword>
<keyword id="KW-0411">Iron-sulfur</keyword>
<keyword id="KW-0479">Metal-binding</keyword>
<keyword id="KW-0560">Oxidoreductase</keyword>
<keyword id="KW-0671">Queuosine biosynthesis</keyword>
<keyword id="KW-0676">Redox-active center</keyword>
<keyword id="KW-1185">Reference proteome</keyword>
<keyword id="KW-0819">tRNA processing</keyword>
<dbReference type="EC" id="1.17.99.6" evidence="1 5"/>
<dbReference type="EMBL" id="AE000511">
    <property type="protein sequence ID" value="AAD07168.1"/>
    <property type="molecule type" value="Genomic_DNA"/>
</dbReference>
<dbReference type="PIR" id="D64532">
    <property type="entry name" value="D64532"/>
</dbReference>
<dbReference type="RefSeq" id="NP_206900.1">
    <property type="nucleotide sequence ID" value="NC_000915.1"/>
</dbReference>
<dbReference type="RefSeq" id="WP_000905219.1">
    <property type="nucleotide sequence ID" value="NC_018939.1"/>
</dbReference>
<dbReference type="SMR" id="O24926"/>
<dbReference type="DIP" id="DIP-3170N"/>
<dbReference type="IntAct" id="O24926">
    <property type="interactions" value="24"/>
</dbReference>
<dbReference type="MINT" id="O24926"/>
<dbReference type="STRING" id="85962.HP_0100"/>
<dbReference type="PaxDb" id="85962-C694_00490"/>
<dbReference type="DNASU" id="899118"/>
<dbReference type="EnsemblBacteria" id="AAD07168">
    <property type="protein sequence ID" value="AAD07168"/>
    <property type="gene ID" value="HP_0100"/>
</dbReference>
<dbReference type="KEGG" id="heo:C694_00490"/>
<dbReference type="KEGG" id="hpy:HP_0100"/>
<dbReference type="PATRIC" id="fig|85962.47.peg.106"/>
<dbReference type="eggNOG" id="COG1636">
    <property type="taxonomic scope" value="Bacteria"/>
</dbReference>
<dbReference type="InParanoid" id="O24926"/>
<dbReference type="OrthoDB" id="9801033at2"/>
<dbReference type="BioCyc" id="MetaCyc:HP0100-MONOMER"/>
<dbReference type="UniPathway" id="UPA00392"/>
<dbReference type="Proteomes" id="UP000000429">
    <property type="component" value="Chromosome"/>
</dbReference>
<dbReference type="GO" id="GO:0051539">
    <property type="term" value="F:4 iron, 4 sulfur cluster binding"/>
    <property type="evidence" value="ECO:0007669"/>
    <property type="project" value="UniProtKB-UniRule"/>
</dbReference>
<dbReference type="GO" id="GO:0052693">
    <property type="term" value="F:epoxyqueuosine reductase activity"/>
    <property type="evidence" value="ECO:0007669"/>
    <property type="project" value="UniProtKB-UniRule"/>
</dbReference>
<dbReference type="GO" id="GO:0046872">
    <property type="term" value="F:metal ion binding"/>
    <property type="evidence" value="ECO:0007669"/>
    <property type="project" value="UniProtKB-KW"/>
</dbReference>
<dbReference type="GO" id="GO:0008616">
    <property type="term" value="P:queuosine biosynthetic process"/>
    <property type="evidence" value="ECO:0007669"/>
    <property type="project" value="UniProtKB-UniRule"/>
</dbReference>
<dbReference type="GO" id="GO:0006400">
    <property type="term" value="P:tRNA modification"/>
    <property type="evidence" value="ECO:0007669"/>
    <property type="project" value="UniProtKB-UniRule"/>
</dbReference>
<dbReference type="HAMAP" id="MF_02089">
    <property type="entry name" value="QueH"/>
    <property type="match status" value="1"/>
</dbReference>
<dbReference type="InterPro" id="IPR003828">
    <property type="entry name" value="QueH"/>
</dbReference>
<dbReference type="PANTHER" id="PTHR36701">
    <property type="entry name" value="EPOXYQUEUOSINE REDUCTASE QUEH"/>
    <property type="match status" value="1"/>
</dbReference>
<dbReference type="PANTHER" id="PTHR36701:SF1">
    <property type="entry name" value="EPOXYQUEUOSINE REDUCTASE QUEH"/>
    <property type="match status" value="1"/>
</dbReference>
<dbReference type="Pfam" id="PF02677">
    <property type="entry name" value="QueH"/>
    <property type="match status" value="1"/>
</dbReference>